<name>FABZ_THISH</name>
<sequence length="149" mass="17170">MSIHQVMRYLPHRYPFLLVDRVTDFKPGEYLEAIKNVSINEPYFQGHFPIRPVMPGVLIMEALAQATGLLAFKTEEARNENQDKQQLYLFVGIDEARFRRQVEPGDQLHLRVELLRVVRGIWRFKAEARVNGDLVASATLMCAGKEIES</sequence>
<dbReference type="EC" id="4.2.1.59" evidence="1"/>
<dbReference type="EMBL" id="CP001339">
    <property type="protein sequence ID" value="ACL72256.1"/>
    <property type="molecule type" value="Genomic_DNA"/>
</dbReference>
<dbReference type="RefSeq" id="WP_012637739.1">
    <property type="nucleotide sequence ID" value="NC_011901.1"/>
</dbReference>
<dbReference type="SMR" id="B8GQ61"/>
<dbReference type="STRING" id="396588.Tgr7_1170"/>
<dbReference type="KEGG" id="tgr:Tgr7_1170"/>
<dbReference type="eggNOG" id="COG0764">
    <property type="taxonomic scope" value="Bacteria"/>
</dbReference>
<dbReference type="HOGENOM" id="CLU_078912_1_0_6"/>
<dbReference type="Proteomes" id="UP000002383">
    <property type="component" value="Chromosome"/>
</dbReference>
<dbReference type="GO" id="GO:0005737">
    <property type="term" value="C:cytoplasm"/>
    <property type="evidence" value="ECO:0007669"/>
    <property type="project" value="UniProtKB-SubCell"/>
</dbReference>
<dbReference type="GO" id="GO:0016020">
    <property type="term" value="C:membrane"/>
    <property type="evidence" value="ECO:0007669"/>
    <property type="project" value="GOC"/>
</dbReference>
<dbReference type="GO" id="GO:0019171">
    <property type="term" value="F:(3R)-hydroxyacyl-[acyl-carrier-protein] dehydratase activity"/>
    <property type="evidence" value="ECO:0007669"/>
    <property type="project" value="UniProtKB-EC"/>
</dbReference>
<dbReference type="GO" id="GO:0006633">
    <property type="term" value="P:fatty acid biosynthetic process"/>
    <property type="evidence" value="ECO:0007669"/>
    <property type="project" value="UniProtKB-UniRule"/>
</dbReference>
<dbReference type="GO" id="GO:0009245">
    <property type="term" value="P:lipid A biosynthetic process"/>
    <property type="evidence" value="ECO:0007669"/>
    <property type="project" value="UniProtKB-UniRule"/>
</dbReference>
<dbReference type="CDD" id="cd01288">
    <property type="entry name" value="FabZ"/>
    <property type="match status" value="1"/>
</dbReference>
<dbReference type="FunFam" id="3.10.129.10:FF:000001">
    <property type="entry name" value="3-hydroxyacyl-[acyl-carrier-protein] dehydratase FabZ"/>
    <property type="match status" value="1"/>
</dbReference>
<dbReference type="Gene3D" id="3.10.129.10">
    <property type="entry name" value="Hotdog Thioesterase"/>
    <property type="match status" value="1"/>
</dbReference>
<dbReference type="HAMAP" id="MF_00406">
    <property type="entry name" value="FabZ"/>
    <property type="match status" value="1"/>
</dbReference>
<dbReference type="InterPro" id="IPR013114">
    <property type="entry name" value="FabA_FabZ"/>
</dbReference>
<dbReference type="InterPro" id="IPR010084">
    <property type="entry name" value="FabZ"/>
</dbReference>
<dbReference type="InterPro" id="IPR029069">
    <property type="entry name" value="HotDog_dom_sf"/>
</dbReference>
<dbReference type="NCBIfam" id="TIGR01750">
    <property type="entry name" value="fabZ"/>
    <property type="match status" value="1"/>
</dbReference>
<dbReference type="NCBIfam" id="NF000582">
    <property type="entry name" value="PRK00006.1"/>
    <property type="match status" value="1"/>
</dbReference>
<dbReference type="PANTHER" id="PTHR30272">
    <property type="entry name" value="3-HYDROXYACYL-[ACYL-CARRIER-PROTEIN] DEHYDRATASE"/>
    <property type="match status" value="1"/>
</dbReference>
<dbReference type="PANTHER" id="PTHR30272:SF1">
    <property type="entry name" value="3-HYDROXYACYL-[ACYL-CARRIER-PROTEIN] DEHYDRATASE"/>
    <property type="match status" value="1"/>
</dbReference>
<dbReference type="Pfam" id="PF07977">
    <property type="entry name" value="FabA"/>
    <property type="match status" value="1"/>
</dbReference>
<dbReference type="SUPFAM" id="SSF54637">
    <property type="entry name" value="Thioesterase/thiol ester dehydrase-isomerase"/>
    <property type="match status" value="1"/>
</dbReference>
<keyword id="KW-0963">Cytoplasm</keyword>
<keyword id="KW-0441">Lipid A biosynthesis</keyword>
<keyword id="KW-0444">Lipid biosynthesis</keyword>
<keyword id="KW-0443">Lipid metabolism</keyword>
<keyword id="KW-0456">Lyase</keyword>
<keyword id="KW-1185">Reference proteome</keyword>
<reference key="1">
    <citation type="journal article" date="2011" name="Stand. Genomic Sci.">
        <title>Complete genome sequence of 'Thioalkalivibrio sulfidophilus' HL-EbGr7.</title>
        <authorList>
            <person name="Muyzer G."/>
            <person name="Sorokin D.Y."/>
            <person name="Mavromatis K."/>
            <person name="Lapidus A."/>
            <person name="Clum A."/>
            <person name="Ivanova N."/>
            <person name="Pati A."/>
            <person name="d'Haeseleer P."/>
            <person name="Woyke T."/>
            <person name="Kyrpides N.C."/>
        </authorList>
    </citation>
    <scope>NUCLEOTIDE SEQUENCE [LARGE SCALE GENOMIC DNA]</scope>
    <source>
        <strain>HL-EbGR7</strain>
    </source>
</reference>
<feature type="chain" id="PRO_1000134721" description="3-hydroxyacyl-[acyl-carrier-protein] dehydratase FabZ">
    <location>
        <begin position="1"/>
        <end position="149"/>
    </location>
</feature>
<feature type="active site" evidence="1">
    <location>
        <position position="47"/>
    </location>
</feature>
<organism>
    <name type="scientific">Thioalkalivibrio sulfidiphilus (strain HL-EbGR7)</name>
    <dbReference type="NCBI Taxonomy" id="396588"/>
    <lineage>
        <taxon>Bacteria</taxon>
        <taxon>Pseudomonadati</taxon>
        <taxon>Pseudomonadota</taxon>
        <taxon>Gammaproteobacteria</taxon>
        <taxon>Chromatiales</taxon>
        <taxon>Ectothiorhodospiraceae</taxon>
        <taxon>Thioalkalivibrio</taxon>
    </lineage>
</organism>
<accession>B8GQ61</accession>
<comment type="function">
    <text evidence="1">Involved in unsaturated fatty acids biosynthesis. Catalyzes the dehydration of short chain beta-hydroxyacyl-ACPs and long chain saturated and unsaturated beta-hydroxyacyl-ACPs.</text>
</comment>
<comment type="catalytic activity">
    <reaction evidence="1">
        <text>a (3R)-hydroxyacyl-[ACP] = a (2E)-enoyl-[ACP] + H2O</text>
        <dbReference type="Rhea" id="RHEA:13097"/>
        <dbReference type="Rhea" id="RHEA-COMP:9925"/>
        <dbReference type="Rhea" id="RHEA-COMP:9945"/>
        <dbReference type="ChEBI" id="CHEBI:15377"/>
        <dbReference type="ChEBI" id="CHEBI:78784"/>
        <dbReference type="ChEBI" id="CHEBI:78827"/>
        <dbReference type="EC" id="4.2.1.59"/>
    </reaction>
</comment>
<comment type="subcellular location">
    <subcellularLocation>
        <location evidence="1">Cytoplasm</location>
    </subcellularLocation>
</comment>
<comment type="similarity">
    <text evidence="1">Belongs to the thioester dehydratase family. FabZ subfamily.</text>
</comment>
<proteinExistence type="inferred from homology"/>
<evidence type="ECO:0000255" key="1">
    <source>
        <dbReference type="HAMAP-Rule" id="MF_00406"/>
    </source>
</evidence>
<gene>
    <name evidence="1" type="primary">fabZ</name>
    <name type="ordered locus">Tgr7_1170</name>
</gene>
<protein>
    <recommendedName>
        <fullName evidence="1">3-hydroxyacyl-[acyl-carrier-protein] dehydratase FabZ</fullName>
        <ecNumber evidence="1">4.2.1.59</ecNumber>
    </recommendedName>
    <alternativeName>
        <fullName evidence="1">(3R)-hydroxymyristoyl-[acyl-carrier-protein] dehydratase</fullName>
        <shortName evidence="1">(3R)-hydroxymyristoyl-ACP dehydrase</shortName>
    </alternativeName>
    <alternativeName>
        <fullName evidence="1">Beta-hydroxyacyl-ACP dehydratase</fullName>
    </alternativeName>
</protein>